<sequence length="159" mass="18427">MRCPFCRHDDTQVVDSRVSEDGAAIRRRRRCSACDKRFTTYERVELALPAVVKKDGSRTEFDRRKIVASMQLALRKRPVAADAIDAAVARIEYQLLASGEREVRSEKLGELVMNELRQLDTIAYVRFASVYRRFEDVSEFEDVIEEFRRAAPAKTPRKR</sequence>
<keyword id="KW-0067">ATP-binding</keyword>
<keyword id="KW-0238">DNA-binding</keyword>
<keyword id="KW-0479">Metal-binding</keyword>
<keyword id="KW-0547">Nucleotide-binding</keyword>
<keyword id="KW-0678">Repressor</keyword>
<keyword id="KW-0804">Transcription</keyword>
<keyword id="KW-0805">Transcription regulation</keyword>
<keyword id="KW-0862">Zinc</keyword>
<keyword id="KW-0863">Zinc-finger</keyword>
<organism>
    <name type="scientific">Burkholderia pseudomallei (strain 1106a)</name>
    <dbReference type="NCBI Taxonomy" id="357348"/>
    <lineage>
        <taxon>Bacteria</taxon>
        <taxon>Pseudomonadati</taxon>
        <taxon>Pseudomonadota</taxon>
        <taxon>Betaproteobacteria</taxon>
        <taxon>Burkholderiales</taxon>
        <taxon>Burkholderiaceae</taxon>
        <taxon>Burkholderia</taxon>
        <taxon>pseudomallei group</taxon>
    </lineage>
</organism>
<comment type="function">
    <text evidence="1">Negatively regulates transcription of bacterial ribonucleotide reductase nrd genes and operons by binding to NrdR-boxes.</text>
</comment>
<comment type="cofactor">
    <cofactor evidence="1">
        <name>Zn(2+)</name>
        <dbReference type="ChEBI" id="CHEBI:29105"/>
    </cofactor>
    <text evidence="1">Binds 1 zinc ion.</text>
</comment>
<comment type="similarity">
    <text evidence="1">Belongs to the NrdR family.</text>
</comment>
<proteinExistence type="inferred from homology"/>
<gene>
    <name evidence="1" type="primary">nrdR</name>
    <name type="ordered locus">BURPS1106A_3233</name>
</gene>
<reference key="1">
    <citation type="journal article" date="2010" name="Genome Biol. Evol.">
        <title>Continuing evolution of Burkholderia mallei through genome reduction and large-scale rearrangements.</title>
        <authorList>
            <person name="Losada L."/>
            <person name="Ronning C.M."/>
            <person name="DeShazer D."/>
            <person name="Woods D."/>
            <person name="Fedorova N."/>
            <person name="Kim H.S."/>
            <person name="Shabalina S.A."/>
            <person name="Pearson T.R."/>
            <person name="Brinkac L."/>
            <person name="Tan P."/>
            <person name="Nandi T."/>
            <person name="Crabtree J."/>
            <person name="Badger J."/>
            <person name="Beckstrom-Sternberg S."/>
            <person name="Saqib M."/>
            <person name="Schutzer S.E."/>
            <person name="Keim P."/>
            <person name="Nierman W.C."/>
        </authorList>
    </citation>
    <scope>NUCLEOTIDE SEQUENCE [LARGE SCALE GENOMIC DNA]</scope>
    <source>
        <strain>1106a</strain>
    </source>
</reference>
<dbReference type="EMBL" id="CP000572">
    <property type="protein sequence ID" value="ABN89410.1"/>
    <property type="molecule type" value="Genomic_DNA"/>
</dbReference>
<dbReference type="RefSeq" id="WP_004185666.1">
    <property type="nucleotide sequence ID" value="NC_009076.1"/>
</dbReference>
<dbReference type="SMR" id="A3NYQ0"/>
<dbReference type="GeneID" id="93061344"/>
<dbReference type="KEGG" id="bpl:BURPS1106A_3233"/>
<dbReference type="HOGENOM" id="CLU_108412_0_0_4"/>
<dbReference type="Proteomes" id="UP000006738">
    <property type="component" value="Chromosome I"/>
</dbReference>
<dbReference type="GO" id="GO:0005524">
    <property type="term" value="F:ATP binding"/>
    <property type="evidence" value="ECO:0007669"/>
    <property type="project" value="UniProtKB-KW"/>
</dbReference>
<dbReference type="GO" id="GO:0003677">
    <property type="term" value="F:DNA binding"/>
    <property type="evidence" value="ECO:0007669"/>
    <property type="project" value="UniProtKB-KW"/>
</dbReference>
<dbReference type="GO" id="GO:0008270">
    <property type="term" value="F:zinc ion binding"/>
    <property type="evidence" value="ECO:0007669"/>
    <property type="project" value="UniProtKB-UniRule"/>
</dbReference>
<dbReference type="GO" id="GO:0045892">
    <property type="term" value="P:negative regulation of DNA-templated transcription"/>
    <property type="evidence" value="ECO:0007669"/>
    <property type="project" value="UniProtKB-UniRule"/>
</dbReference>
<dbReference type="HAMAP" id="MF_00440">
    <property type="entry name" value="NrdR"/>
    <property type="match status" value="1"/>
</dbReference>
<dbReference type="InterPro" id="IPR005144">
    <property type="entry name" value="ATP-cone_dom"/>
</dbReference>
<dbReference type="InterPro" id="IPR055173">
    <property type="entry name" value="NrdR-like_N"/>
</dbReference>
<dbReference type="InterPro" id="IPR003796">
    <property type="entry name" value="RNR_NrdR-like"/>
</dbReference>
<dbReference type="NCBIfam" id="TIGR00244">
    <property type="entry name" value="transcriptional regulator NrdR"/>
    <property type="match status" value="1"/>
</dbReference>
<dbReference type="PANTHER" id="PTHR30455">
    <property type="entry name" value="TRANSCRIPTIONAL REPRESSOR NRDR"/>
    <property type="match status" value="1"/>
</dbReference>
<dbReference type="PANTHER" id="PTHR30455:SF2">
    <property type="entry name" value="TRANSCRIPTIONAL REPRESSOR NRDR"/>
    <property type="match status" value="1"/>
</dbReference>
<dbReference type="Pfam" id="PF03477">
    <property type="entry name" value="ATP-cone"/>
    <property type="match status" value="1"/>
</dbReference>
<dbReference type="Pfam" id="PF22811">
    <property type="entry name" value="Zn_ribbon_NrdR"/>
    <property type="match status" value="1"/>
</dbReference>
<dbReference type="PROSITE" id="PS51161">
    <property type="entry name" value="ATP_CONE"/>
    <property type="match status" value="1"/>
</dbReference>
<accession>A3NYQ0</accession>
<protein>
    <recommendedName>
        <fullName evidence="1">Transcriptional repressor NrdR</fullName>
    </recommendedName>
</protein>
<evidence type="ECO:0000255" key="1">
    <source>
        <dbReference type="HAMAP-Rule" id="MF_00440"/>
    </source>
</evidence>
<feature type="chain" id="PRO_1000080725" description="Transcriptional repressor NrdR">
    <location>
        <begin position="1"/>
        <end position="159"/>
    </location>
</feature>
<feature type="domain" description="ATP-cone" evidence="1">
    <location>
        <begin position="49"/>
        <end position="139"/>
    </location>
</feature>
<feature type="zinc finger region" evidence="1">
    <location>
        <begin position="3"/>
        <end position="34"/>
    </location>
</feature>
<name>NRDR_BURP0</name>